<keyword id="KW-0938">Abscisic acid signaling pathway</keyword>
<keyword id="KW-0025">Alternative splicing</keyword>
<keyword id="KW-0963">Cytoplasm</keyword>
<keyword id="KW-0597">Phosphoprotein</keyword>
<keyword id="KW-1185">Reference proteome</keyword>
<accession>Q9C8E6</accession>
<accession>C0Z238</accession>
<accession>Q8VY94</accession>
<accession>Q9C856</accession>
<name>PMI1_ARATH</name>
<reference key="1">
    <citation type="journal article" date="2000" name="Nature">
        <title>Sequence and analysis of chromosome 1 of the plant Arabidopsis thaliana.</title>
        <authorList>
            <person name="Theologis A."/>
            <person name="Ecker J.R."/>
            <person name="Palm C.J."/>
            <person name="Federspiel N.A."/>
            <person name="Kaul S."/>
            <person name="White O."/>
            <person name="Alonso J."/>
            <person name="Altafi H."/>
            <person name="Araujo R."/>
            <person name="Bowman C.L."/>
            <person name="Brooks S.Y."/>
            <person name="Buehler E."/>
            <person name="Chan A."/>
            <person name="Chao Q."/>
            <person name="Chen H."/>
            <person name="Cheuk R.F."/>
            <person name="Chin C.W."/>
            <person name="Chung M.K."/>
            <person name="Conn L."/>
            <person name="Conway A.B."/>
            <person name="Conway A.R."/>
            <person name="Creasy T.H."/>
            <person name="Dewar K."/>
            <person name="Dunn P."/>
            <person name="Etgu P."/>
            <person name="Feldblyum T.V."/>
            <person name="Feng J.-D."/>
            <person name="Fong B."/>
            <person name="Fujii C.Y."/>
            <person name="Gill J.E."/>
            <person name="Goldsmith A.D."/>
            <person name="Haas B."/>
            <person name="Hansen N.F."/>
            <person name="Hughes B."/>
            <person name="Huizar L."/>
            <person name="Hunter J.L."/>
            <person name="Jenkins J."/>
            <person name="Johnson-Hopson C."/>
            <person name="Khan S."/>
            <person name="Khaykin E."/>
            <person name="Kim C.J."/>
            <person name="Koo H.L."/>
            <person name="Kremenetskaia I."/>
            <person name="Kurtz D.B."/>
            <person name="Kwan A."/>
            <person name="Lam B."/>
            <person name="Langin-Hooper S."/>
            <person name="Lee A."/>
            <person name="Lee J.M."/>
            <person name="Lenz C.A."/>
            <person name="Li J.H."/>
            <person name="Li Y.-P."/>
            <person name="Lin X."/>
            <person name="Liu S.X."/>
            <person name="Liu Z.A."/>
            <person name="Luros J.S."/>
            <person name="Maiti R."/>
            <person name="Marziali A."/>
            <person name="Militscher J."/>
            <person name="Miranda M."/>
            <person name="Nguyen M."/>
            <person name="Nierman W.C."/>
            <person name="Osborne B.I."/>
            <person name="Pai G."/>
            <person name="Peterson J."/>
            <person name="Pham P.K."/>
            <person name="Rizzo M."/>
            <person name="Rooney T."/>
            <person name="Rowley D."/>
            <person name="Sakano H."/>
            <person name="Salzberg S.L."/>
            <person name="Schwartz J.R."/>
            <person name="Shinn P."/>
            <person name="Southwick A.M."/>
            <person name="Sun H."/>
            <person name="Tallon L.J."/>
            <person name="Tambunga G."/>
            <person name="Toriumi M.J."/>
            <person name="Town C.D."/>
            <person name="Utterback T."/>
            <person name="Van Aken S."/>
            <person name="Vaysberg M."/>
            <person name="Vysotskaia V.S."/>
            <person name="Walker M."/>
            <person name="Wu D."/>
            <person name="Yu G."/>
            <person name="Fraser C.M."/>
            <person name="Venter J.C."/>
            <person name="Davis R.W."/>
        </authorList>
    </citation>
    <scope>NUCLEOTIDE SEQUENCE [LARGE SCALE GENOMIC DNA]</scope>
    <source>
        <strain>cv. Columbia</strain>
    </source>
</reference>
<reference key="2">
    <citation type="journal article" date="2017" name="Plant J.">
        <title>Araport11: a complete reannotation of the Arabidopsis thaliana reference genome.</title>
        <authorList>
            <person name="Cheng C.Y."/>
            <person name="Krishnakumar V."/>
            <person name="Chan A.P."/>
            <person name="Thibaud-Nissen F."/>
            <person name="Schobel S."/>
            <person name="Town C.D."/>
        </authorList>
    </citation>
    <scope>GENOME REANNOTATION</scope>
    <source>
        <strain>cv. Columbia</strain>
    </source>
</reference>
<reference key="3">
    <citation type="journal article" date="2009" name="DNA Res.">
        <title>Analysis of multiple occurrences of alternative splicing events in Arabidopsis thaliana using novel sequenced full-length cDNAs.</title>
        <authorList>
            <person name="Iida K."/>
            <person name="Fukami-Kobayashi K."/>
            <person name="Toyoda A."/>
            <person name="Sakaki Y."/>
            <person name="Kobayashi M."/>
            <person name="Seki M."/>
            <person name="Shinozaki K."/>
        </authorList>
    </citation>
    <scope>NUCLEOTIDE SEQUENCE [LARGE SCALE MRNA] (ISOFORM 2)</scope>
    <source>
        <strain>cv. Columbia</strain>
        <tissue>Rosette leaf</tissue>
    </source>
</reference>
<reference key="4">
    <citation type="journal article" date="2003" name="Science">
        <title>Empirical analysis of transcriptional activity in the Arabidopsis genome.</title>
        <authorList>
            <person name="Yamada K."/>
            <person name="Lim J."/>
            <person name="Dale J.M."/>
            <person name="Chen H."/>
            <person name="Shinn P."/>
            <person name="Palm C.J."/>
            <person name="Southwick A.M."/>
            <person name="Wu H.C."/>
            <person name="Kim C.J."/>
            <person name="Nguyen M."/>
            <person name="Pham P.K."/>
            <person name="Cheuk R.F."/>
            <person name="Karlin-Newmann G."/>
            <person name="Liu S.X."/>
            <person name="Lam B."/>
            <person name="Sakano H."/>
            <person name="Wu T."/>
            <person name="Yu G."/>
            <person name="Miranda M."/>
            <person name="Quach H.L."/>
            <person name="Tripp M."/>
            <person name="Chang C.H."/>
            <person name="Lee J.M."/>
            <person name="Toriumi M.J."/>
            <person name="Chan M.M."/>
            <person name="Tang C.C."/>
            <person name="Onodera C.S."/>
            <person name="Deng J.M."/>
            <person name="Akiyama K."/>
            <person name="Ansari Y."/>
            <person name="Arakawa T."/>
            <person name="Banh J."/>
            <person name="Banno F."/>
            <person name="Bowser L."/>
            <person name="Brooks S.Y."/>
            <person name="Carninci P."/>
            <person name="Chao Q."/>
            <person name="Choy N."/>
            <person name="Enju A."/>
            <person name="Goldsmith A.D."/>
            <person name="Gurjal M."/>
            <person name="Hansen N.F."/>
            <person name="Hayashizaki Y."/>
            <person name="Johnson-Hopson C."/>
            <person name="Hsuan V.W."/>
            <person name="Iida K."/>
            <person name="Karnes M."/>
            <person name="Khan S."/>
            <person name="Koesema E."/>
            <person name="Ishida J."/>
            <person name="Jiang P.X."/>
            <person name="Jones T."/>
            <person name="Kawai J."/>
            <person name="Kamiya A."/>
            <person name="Meyers C."/>
            <person name="Nakajima M."/>
            <person name="Narusaka M."/>
            <person name="Seki M."/>
            <person name="Sakurai T."/>
            <person name="Satou M."/>
            <person name="Tamse R."/>
            <person name="Vaysberg M."/>
            <person name="Wallender E.K."/>
            <person name="Wong C."/>
            <person name="Yamamura Y."/>
            <person name="Yuan S."/>
            <person name="Shinozaki K."/>
            <person name="Davis R.W."/>
            <person name="Theologis A."/>
            <person name="Ecker J.R."/>
        </authorList>
    </citation>
    <scope>NUCLEOTIDE SEQUENCE [LARGE SCALE MRNA] OF 96-843 (ISOFORM 1)</scope>
    <source>
        <strain>cv. Columbia</strain>
    </source>
</reference>
<reference key="5">
    <citation type="journal article" date="2003" name="Mol. Cell. Proteomics">
        <title>Large-scale analysis of in vivo phosphorylated membrane proteins by immobilized metal ion affinity chromatography and mass spectrometry.</title>
        <authorList>
            <person name="Nuehse T.S."/>
            <person name="Stensballe A."/>
            <person name="Jensen O.N."/>
            <person name="Peck S.C."/>
        </authorList>
    </citation>
    <scope>PHOSPHORYLATION [LARGE SCALE ANALYSIS] AT SER-507</scope>
    <scope>IDENTIFICATION BY MASS SPECTROMETRY [LARGE SCALE ANALYSIS]</scope>
    <source>
        <strain>cv. La-0</strain>
    </source>
</reference>
<reference key="6">
    <citation type="journal article" date="2004" name="Plant Cell">
        <title>Phosphoproteomics of the Arabidopsis plasma membrane and a new phosphorylation site database.</title>
        <authorList>
            <person name="Nuehse T.S."/>
            <person name="Stensballe A."/>
            <person name="Jensen O.N."/>
            <person name="Peck S.C."/>
        </authorList>
    </citation>
    <scope>IDENTIFICATION BY MASS SPECTROMETRY [LARGE SCALE ANALYSIS]</scope>
</reference>
<reference key="7">
    <citation type="journal article" date="2005" name="Plant Physiol.">
        <title>A plant-specific protein essential for blue-light-induced chloroplast movements.</title>
        <authorList>
            <person name="DeBlasio S.L."/>
            <person name="Luesse D.L."/>
            <person name="Hangarter R.P."/>
        </authorList>
    </citation>
    <scope>FUNCTION</scope>
    <scope>DISRUPTION PHENOTYPE</scope>
    <scope>TISSUE SPECIFICITY</scope>
    <source>
        <strain>cv. Columbia</strain>
    </source>
</reference>
<reference key="8">
    <citation type="journal article" date="2009" name="J. Proteomics">
        <title>Phosphoproteomic analysis of nuclei-enriched fractions from Arabidopsis thaliana.</title>
        <authorList>
            <person name="Jones A.M.E."/>
            <person name="MacLean D."/>
            <person name="Studholme D.J."/>
            <person name="Serna-Sanz A."/>
            <person name="Andreasson E."/>
            <person name="Rathjen J.P."/>
            <person name="Peck S.C."/>
        </authorList>
    </citation>
    <scope>PHOSPHORYLATION [LARGE SCALE ANALYSIS] AT SER-507</scope>
    <scope>IDENTIFICATION BY MASS SPECTROMETRY [LARGE SCALE ANALYSIS]</scope>
    <source>
        <strain>cv. Columbia</strain>
    </source>
</reference>
<reference key="9">
    <citation type="journal article" date="2009" name="Plant Physiol.">
        <title>Large-scale Arabidopsis phosphoproteome profiling reveals novel chloroplast kinase substrates and phosphorylation networks.</title>
        <authorList>
            <person name="Reiland S."/>
            <person name="Messerli G."/>
            <person name="Baerenfaller K."/>
            <person name="Gerrits B."/>
            <person name="Endler A."/>
            <person name="Grossmann J."/>
            <person name="Gruissem W."/>
            <person name="Baginsky S."/>
        </authorList>
    </citation>
    <scope>PHOSPHORYLATION [LARGE SCALE ANALYSIS] AT SER-314; SER-328; THR-404; SER-407 AND THR-410</scope>
    <scope>IDENTIFICATION BY MASS SPECTROMETRY [LARGE SCALE ANALYSIS]</scope>
</reference>
<reference key="10">
    <citation type="journal article" date="2014" name="Plant Physiol. Biochem.">
        <title>PLASTID MOVEMENT IMPAIRED1 mediates ABA sensitivity during germination and implicates ABA in light-mediated Chloroplast movements.</title>
        <authorList>
            <person name="Rojas-Pierce M."/>
            <person name="Whippo C.W."/>
            <person name="Davis P.A."/>
            <person name="Hangarter R.P."/>
            <person name="Springer P.S."/>
        </authorList>
    </citation>
    <scope>FUNCTION</scope>
    <scope>DISRUPTION PHENOTYPE</scope>
    <scope>REPRESSION BY OSMOTIC STRESS</scope>
    <source>
        <strain>cv. Landsberg erecta</strain>
    </source>
</reference>
<reference key="11">
    <citation type="journal article" date="2015" name="Plant Physiol.">
        <title>PLASTID MOVEMENT IMPAIRED1 and PLASTID MOVEMENT IMPAIRED1-RELATED1 mediate photorelocation movements of both chloroplasts and nuclei.</title>
        <authorList>
            <person name="Suetsugu N."/>
            <person name="Higa T."/>
            <person name="Kong S.-G."/>
            <person name="Wada M."/>
        </authorList>
    </citation>
    <scope>FUNCTION</scope>
    <scope>DISRUPTION PHENOTYPE</scope>
    <scope>SUBCELLULAR LOCATION</scope>
    <scope>TISSUE SPECIFICITY</scope>
    <source>
        <strain>cv. Columbia GL1</strain>
    </source>
</reference>
<proteinExistence type="evidence at protein level"/>
<sequence>MAGEYSGSRSSNTQLLAELEALSENLYQKPQVSVGNRRTNSLALPRSSVPSLVTSADEVSTARAEDLTVSKPRARRLSLSPWRSRPKLEVEEEENVTQSNRIVKKPEESSSGSGVKEEKKGIWNWKPIRGLVRIGMQKLSCLLSVEVVAAQNLPASMNGLRLGVCVRKKETKDGAVQTMPCRVSQGSADFEETLFIKCHVYYSPANGKGSPAKFEARPFLFYLFAVDAKELEFGRHVVDLSELIQESVEKMNYEGARVRQWDMNWGLSGKAKGGELALKLGFQIMEKDGGAGIYSKQGEFGMKPSSKPKNFANSFGRKQSKTSFSVPSPKMTSRSEAWTPASGVESVSDFHGMEHLNLDEPEEKPEEKPVQKNDKPEQRAEDDQEEPDFEVVDKGVEFDDDLETEKSDGTIGERSVEMKEQHVNVDDPRHIMRLTELDSIAKQIKALESMMKDESDGGDGETESQRLDEEEQTVTKEFLQLLEDEETEKLKFYQHKMDISELRSGESVDDESENYLSDLGKGIGCVVQTRDGGYLVSMNPFDTVVMRKDTPKLVMQISKQIVVLPEAGPATGFELFHRMAGSGEELESKISSLMAIDELMGKTGEQVAFEGIASAIIQGRNKERANTSAARTVAAVKTMANAMSSGRRERIMTGIWNVEENPLTSAEEVLAVSLQKLEEMVVEGLKIQADMVDDEAPFEVSAAKGQKNPLESTIPLEEWQKEHRTQQKLTVLATVQLRDPTRRYEAVGGTVVVAVQAEEEEEKGLKVGSLHIGGVKKDAAEKRRLTAAQWLVEHGMGKKGKKKSNIKKKEKEEEEEEMLWSLSSRVMADMWLKSIRNPDVKLH</sequence>
<dbReference type="EMBL" id="AC025815">
    <property type="protein sequence ID" value="AAG51317.1"/>
    <property type="molecule type" value="Genomic_DNA"/>
</dbReference>
<dbReference type="EMBL" id="AC035249">
    <property type="protein sequence ID" value="AAG51233.1"/>
    <property type="molecule type" value="Genomic_DNA"/>
</dbReference>
<dbReference type="EMBL" id="CP002684">
    <property type="protein sequence ID" value="AEE31926.1"/>
    <property type="molecule type" value="Genomic_DNA"/>
</dbReference>
<dbReference type="EMBL" id="AK318652">
    <property type="protein sequence ID" value="BAH56767.1"/>
    <property type="molecule type" value="mRNA"/>
</dbReference>
<dbReference type="EMBL" id="AY072341">
    <property type="protein sequence ID" value="AAL61948.1"/>
    <property type="status" value="ALT_INIT"/>
    <property type="molecule type" value="mRNA"/>
</dbReference>
<dbReference type="EMBL" id="BT010543">
    <property type="protein sequence ID" value="AAQ65166.1"/>
    <property type="molecule type" value="mRNA"/>
</dbReference>
<dbReference type="PIR" id="D96495">
    <property type="entry name" value="D96495"/>
</dbReference>
<dbReference type="RefSeq" id="NP_174979.5">
    <molecule id="Q9C8E6-1"/>
    <property type="nucleotide sequence ID" value="NM_103439.7"/>
</dbReference>
<dbReference type="FunCoup" id="Q9C8E6">
    <property type="interactions" value="1441"/>
</dbReference>
<dbReference type="STRING" id="3702.Q9C8E6"/>
<dbReference type="iPTMnet" id="Q9C8E6"/>
<dbReference type="PaxDb" id="3702-AT1G42550.1"/>
<dbReference type="ProteomicsDB" id="234888">
    <molecule id="Q9C8E6-1"/>
</dbReference>
<dbReference type="EnsemblPlants" id="AT1G42550.1">
    <molecule id="Q9C8E6-1"/>
    <property type="protein sequence ID" value="AT1G42550.1"/>
    <property type="gene ID" value="AT1G42550"/>
</dbReference>
<dbReference type="GeneID" id="840860"/>
<dbReference type="Gramene" id="AT1G42550.1">
    <molecule id="Q9C8E6-1"/>
    <property type="protein sequence ID" value="AT1G42550.1"/>
    <property type="gene ID" value="AT1G42550"/>
</dbReference>
<dbReference type="KEGG" id="ath:AT1G42550"/>
<dbReference type="Araport" id="AT1G42550"/>
<dbReference type="TAIR" id="AT1G42550">
    <property type="gene designation" value="PMI1"/>
</dbReference>
<dbReference type="eggNOG" id="ENOG502QSA1">
    <property type="taxonomic scope" value="Eukaryota"/>
</dbReference>
<dbReference type="HOGENOM" id="CLU_003931_1_0_1"/>
<dbReference type="InParanoid" id="Q9C8E6"/>
<dbReference type="OMA" id="HIGMNRL"/>
<dbReference type="OrthoDB" id="656546at2759"/>
<dbReference type="PhylomeDB" id="Q9C8E6"/>
<dbReference type="PRO" id="PR:Q9C8E6"/>
<dbReference type="Proteomes" id="UP000006548">
    <property type="component" value="Chromosome 1"/>
</dbReference>
<dbReference type="ExpressionAtlas" id="Q9C8E6">
    <property type="expression patterns" value="baseline and differential"/>
</dbReference>
<dbReference type="GO" id="GO:0005829">
    <property type="term" value="C:cytosol"/>
    <property type="evidence" value="ECO:0000314"/>
    <property type="project" value="TAIR"/>
</dbReference>
<dbReference type="GO" id="GO:0005634">
    <property type="term" value="C:nucleus"/>
    <property type="evidence" value="ECO:0007005"/>
    <property type="project" value="TAIR"/>
</dbReference>
<dbReference type="GO" id="GO:0005886">
    <property type="term" value="C:plasma membrane"/>
    <property type="evidence" value="ECO:0007005"/>
    <property type="project" value="TAIR"/>
</dbReference>
<dbReference type="GO" id="GO:1902265">
    <property type="term" value="P:abscisic acid homeostasis"/>
    <property type="evidence" value="ECO:0000315"/>
    <property type="project" value="UniProtKB"/>
</dbReference>
<dbReference type="GO" id="GO:0009738">
    <property type="term" value="P:abscisic acid-activated signaling pathway"/>
    <property type="evidence" value="ECO:0007669"/>
    <property type="project" value="UniProtKB-KW"/>
</dbReference>
<dbReference type="GO" id="GO:0030048">
    <property type="term" value="P:actin filament-based movement"/>
    <property type="evidence" value="ECO:0000315"/>
    <property type="project" value="UniProtKB"/>
</dbReference>
<dbReference type="GO" id="GO:0009903">
    <property type="term" value="P:chloroplast avoidance movement"/>
    <property type="evidence" value="ECO:0000315"/>
    <property type="project" value="UniProtKB"/>
</dbReference>
<dbReference type="GO" id="GO:0009902">
    <property type="term" value="P:chloroplast relocation"/>
    <property type="evidence" value="ECO:0000315"/>
    <property type="project" value="UniProtKB"/>
</dbReference>
<dbReference type="GO" id="GO:0031022">
    <property type="term" value="P:nuclear migration along microfilament"/>
    <property type="evidence" value="ECO:0000315"/>
    <property type="project" value="TAIR"/>
</dbReference>
<dbReference type="GO" id="GO:0009787">
    <property type="term" value="P:regulation of abscisic acid-activated signaling pathway"/>
    <property type="evidence" value="ECO:0000315"/>
    <property type="project" value="UniProtKB"/>
</dbReference>
<dbReference type="GO" id="GO:0010029">
    <property type="term" value="P:regulation of seed germination"/>
    <property type="evidence" value="ECO:0000315"/>
    <property type="project" value="UniProtKB"/>
</dbReference>
<dbReference type="GO" id="GO:0009637">
    <property type="term" value="P:response to blue light"/>
    <property type="evidence" value="ECO:0000315"/>
    <property type="project" value="UniProtKB"/>
</dbReference>
<dbReference type="GO" id="GO:0006970">
    <property type="term" value="P:response to osmotic stress"/>
    <property type="evidence" value="ECO:0000304"/>
    <property type="project" value="UniProtKB"/>
</dbReference>
<dbReference type="InterPro" id="IPR019448">
    <property type="entry name" value="NT-C2"/>
</dbReference>
<dbReference type="InterPro" id="IPR039614">
    <property type="entry name" value="PMI1-like"/>
</dbReference>
<dbReference type="InterPro" id="IPR048972">
    <property type="entry name" value="PMI1_PMIR1-2_C"/>
</dbReference>
<dbReference type="PANTHER" id="PTHR33414:SF2">
    <property type="entry name" value="PROTEIN PLASTID MOVEMENT IMPAIRED 1"/>
    <property type="match status" value="1"/>
</dbReference>
<dbReference type="PANTHER" id="PTHR33414">
    <property type="entry name" value="PROTEIN PLASTID MOVEMENT IMPAIRED 1-RELATED 1"/>
    <property type="match status" value="1"/>
</dbReference>
<dbReference type="Pfam" id="PF10358">
    <property type="entry name" value="NT-C2"/>
    <property type="match status" value="1"/>
</dbReference>
<dbReference type="Pfam" id="PF21745">
    <property type="entry name" value="PMI1_PMIR1-2_C"/>
    <property type="match status" value="1"/>
</dbReference>
<dbReference type="PROSITE" id="PS51840">
    <property type="entry name" value="C2_NT"/>
    <property type="match status" value="1"/>
</dbReference>
<evidence type="ECO:0000255" key="1">
    <source>
        <dbReference type="PROSITE-ProRule" id="PRU01186"/>
    </source>
</evidence>
<evidence type="ECO:0000256" key="2">
    <source>
        <dbReference type="SAM" id="MobiDB-lite"/>
    </source>
</evidence>
<evidence type="ECO:0000269" key="3">
    <source>
    </source>
</evidence>
<evidence type="ECO:0000269" key="4">
    <source>
    </source>
</evidence>
<evidence type="ECO:0000269" key="5">
    <source>
    </source>
</evidence>
<evidence type="ECO:0000303" key="6">
    <source>
    </source>
</evidence>
<evidence type="ECO:0000303" key="7">
    <source>
    </source>
</evidence>
<evidence type="ECO:0000305" key="8"/>
<evidence type="ECO:0000312" key="9">
    <source>
        <dbReference type="Araport" id="AT1G42550"/>
    </source>
</evidence>
<evidence type="ECO:0000312" key="10">
    <source>
        <dbReference type="EMBL" id="AAG51233.1"/>
    </source>
</evidence>
<evidence type="ECO:0000312" key="11">
    <source>
        <dbReference type="EMBL" id="AAG51317.1"/>
    </source>
</evidence>
<evidence type="ECO:0007744" key="12">
    <source>
    </source>
</evidence>
<evidence type="ECO:0007744" key="13">
    <source>
    </source>
</evidence>
<evidence type="ECO:0007744" key="14">
    <source>
    </source>
</evidence>
<organism>
    <name type="scientific">Arabidopsis thaliana</name>
    <name type="common">Mouse-ear cress</name>
    <dbReference type="NCBI Taxonomy" id="3702"/>
    <lineage>
        <taxon>Eukaryota</taxon>
        <taxon>Viridiplantae</taxon>
        <taxon>Streptophyta</taxon>
        <taxon>Embryophyta</taxon>
        <taxon>Tracheophyta</taxon>
        <taxon>Spermatophyta</taxon>
        <taxon>Magnoliopsida</taxon>
        <taxon>eudicotyledons</taxon>
        <taxon>Gunneridae</taxon>
        <taxon>Pentapetalae</taxon>
        <taxon>rosids</taxon>
        <taxon>malvids</taxon>
        <taxon>Brassicales</taxon>
        <taxon>Brassicaceae</taxon>
        <taxon>Camelineae</taxon>
        <taxon>Arabidopsis</taxon>
    </lineage>
</organism>
<gene>
    <name evidence="6" type="primary">PMI1</name>
    <name evidence="9" type="ordered locus">At1g42550</name>
    <name evidence="10" type="ORF">F8D11.1</name>
    <name evidence="11" type="ORF">T8D8.2</name>
</gene>
<feature type="chain" id="PRO_0000435990" description="Protein PLASTID MOVEMENT IMPAIRED 1">
    <location>
        <begin position="1"/>
        <end position="843"/>
    </location>
</feature>
<feature type="domain" description="C2 NT-type" evidence="1">
    <location>
        <begin position="131"/>
        <end position="284"/>
    </location>
</feature>
<feature type="region of interest" description="Disordered" evidence="2">
    <location>
        <begin position="30"/>
        <end position="65"/>
    </location>
</feature>
<feature type="region of interest" description="Disordered" evidence="2">
    <location>
        <begin position="88"/>
        <end position="116"/>
    </location>
</feature>
<feature type="region of interest" description="Disordered" evidence="2">
    <location>
        <begin position="300"/>
        <end position="412"/>
    </location>
</feature>
<feature type="region of interest" description="Disordered" evidence="2">
    <location>
        <begin position="450"/>
        <end position="472"/>
    </location>
</feature>
<feature type="compositionally biased region" description="Polar residues" evidence="2">
    <location>
        <begin position="30"/>
        <end position="58"/>
    </location>
</feature>
<feature type="compositionally biased region" description="Polar residues" evidence="2">
    <location>
        <begin position="307"/>
        <end position="336"/>
    </location>
</feature>
<feature type="compositionally biased region" description="Basic and acidic residues" evidence="2">
    <location>
        <begin position="365"/>
        <end position="381"/>
    </location>
</feature>
<feature type="compositionally biased region" description="Acidic residues" evidence="2">
    <location>
        <begin position="456"/>
        <end position="472"/>
    </location>
</feature>
<feature type="modified residue" description="Phosphoserine" evidence="14">
    <location>
        <position position="314"/>
    </location>
</feature>
<feature type="modified residue" description="Phosphoserine" evidence="14">
    <location>
        <position position="328"/>
    </location>
</feature>
<feature type="modified residue" description="Phosphothreonine" evidence="14">
    <location>
        <position position="404"/>
    </location>
</feature>
<feature type="modified residue" description="Phosphoserine" evidence="14">
    <location>
        <position position="407"/>
    </location>
</feature>
<feature type="modified residue" description="Phosphothreonine" evidence="14">
    <location>
        <position position="410"/>
    </location>
</feature>
<feature type="modified residue" description="Phosphoserine" evidence="12 13">
    <location>
        <position position="507"/>
    </location>
</feature>
<feature type="splice variant" id="VSP_058206" description="In isoform 2.">
    <location>
        <begin position="660"/>
        <end position="780"/>
    </location>
</feature>
<protein>
    <recommendedName>
        <fullName evidence="6">Protein PLASTID MOVEMENT IMPAIRED 1</fullName>
    </recommendedName>
</protein>
<comment type="function">
    <text evidence="3 4 5">Necessary for chloroplast and nuclear photorelocation movements via the regulation of chloroplast-actin (cp-actin) filaments in mesophyll cells, and together with PMIR1, in pavement cells (PubMed:26324877). Required component for both the low- and high-light-dependent chloroplast movement responses via an abscisic acid (ABA) pathway (PubMed:16113226, PubMed:25154696). Involved in the ABA response pathway during seed germination. Modulates ABA accumulation during periods of water deficit at the seedling stage (PubMed:25154696).</text>
</comment>
<comment type="subcellular location">
    <subcellularLocation>
        <location evidence="5">Cytoplasm</location>
    </subcellularLocation>
</comment>
<comment type="alternative products">
    <event type="alternative splicing"/>
    <isoform>
        <id>Q9C8E6-1</id>
        <name>1</name>
        <sequence type="displayed"/>
    </isoform>
    <isoform>
        <id>Q9C8E6-2</id>
        <name>2</name>
        <sequence type="described" ref="VSP_058206"/>
    </isoform>
</comment>
<comment type="tissue specificity">
    <text evidence="3 5">Expressed in leaves, stems, cauline leaves, and flowers but not in roots (PubMed:16113226). Present in leaves in both mesophyll and pavement cells (PubMed:26324877).</text>
</comment>
<comment type="induction">
    <text evidence="7">Repressed by osmotic stress (300 mM mannitol).</text>
</comment>
<comment type="disruption phenotype">
    <text evidence="3 4 5">Severely attenuated chloroplast movements under low- and high-light fluence, leading to evenly distributed chloroplasts in leaf mesophyll in pmi1-1 (PubMed:16113226, PubMed:25154696). Severe defects in both chloroplast and nuclear photorelocation movements resulting from the impaired regulation of chloroplast-actin filaments in pmi1-5 (PubMed:26324877). Reduced response to water-deficit and abscisic acid (ABA) treatments. The mutants pmi1-3 and pmi1-4 are hypersensitive to ABA during seed germination, but not pmi1-1, which is hyposensitive. Chloroplasts of pmi1-3 have altered chloroplast movements in low light (PubMed:25154696).</text>
</comment>
<comment type="sequence caution" evidence="8">
    <conflict type="erroneous initiation">
        <sequence resource="EMBL-CDS" id="AAL61948"/>
    </conflict>
    <text>Truncated N-terminus.</text>
</comment>